<protein>
    <recommendedName>
        <fullName evidence="1">Putative pre-16S rRNA nuclease</fullName>
        <ecNumber evidence="1">3.1.-.-</ecNumber>
    </recommendedName>
</protein>
<organism>
    <name type="scientific">Ureaplasma parvum serovar 3 (strain ATCC 700970)</name>
    <dbReference type="NCBI Taxonomy" id="273119"/>
    <lineage>
        <taxon>Bacteria</taxon>
        <taxon>Bacillati</taxon>
        <taxon>Mycoplasmatota</taxon>
        <taxon>Mycoplasmoidales</taxon>
        <taxon>Mycoplasmoidaceae</taxon>
        <taxon>Ureaplasma</taxon>
    </lineage>
</organism>
<proteinExistence type="inferred from homology"/>
<dbReference type="EC" id="3.1.-.-" evidence="1"/>
<dbReference type="EMBL" id="AF222894">
    <property type="protein sequence ID" value="AAF30779.1"/>
    <property type="molecule type" value="Genomic_DNA"/>
</dbReference>
<dbReference type="RefSeq" id="WP_006688766.1">
    <property type="nucleotide sequence ID" value="NC_002162.1"/>
</dbReference>
<dbReference type="SMR" id="Q9PQC1"/>
<dbReference type="STRING" id="273119.UU370"/>
<dbReference type="EnsemblBacteria" id="AAF30779">
    <property type="protein sequence ID" value="AAF30779"/>
    <property type="gene ID" value="UU370"/>
</dbReference>
<dbReference type="GeneID" id="29672599"/>
<dbReference type="KEGG" id="uur:UU370"/>
<dbReference type="eggNOG" id="COG0816">
    <property type="taxonomic scope" value="Bacteria"/>
</dbReference>
<dbReference type="HOGENOM" id="CLU_098240_2_2_14"/>
<dbReference type="OrthoDB" id="9796140at2"/>
<dbReference type="Proteomes" id="UP000000423">
    <property type="component" value="Chromosome"/>
</dbReference>
<dbReference type="GO" id="GO:0005829">
    <property type="term" value="C:cytosol"/>
    <property type="evidence" value="ECO:0007669"/>
    <property type="project" value="TreeGrafter"/>
</dbReference>
<dbReference type="GO" id="GO:0004518">
    <property type="term" value="F:nuclease activity"/>
    <property type="evidence" value="ECO:0007669"/>
    <property type="project" value="UniProtKB-KW"/>
</dbReference>
<dbReference type="GO" id="GO:0000967">
    <property type="term" value="P:rRNA 5'-end processing"/>
    <property type="evidence" value="ECO:0007669"/>
    <property type="project" value="UniProtKB-UniRule"/>
</dbReference>
<dbReference type="CDD" id="cd16964">
    <property type="entry name" value="YqgF"/>
    <property type="match status" value="1"/>
</dbReference>
<dbReference type="Gene3D" id="3.30.420.140">
    <property type="entry name" value="YqgF/RNase H-like domain"/>
    <property type="match status" value="1"/>
</dbReference>
<dbReference type="HAMAP" id="MF_00651">
    <property type="entry name" value="Nuclease_YqgF"/>
    <property type="match status" value="1"/>
</dbReference>
<dbReference type="InterPro" id="IPR012337">
    <property type="entry name" value="RNaseH-like_sf"/>
</dbReference>
<dbReference type="InterPro" id="IPR005227">
    <property type="entry name" value="YqgF"/>
</dbReference>
<dbReference type="InterPro" id="IPR006641">
    <property type="entry name" value="YqgF/RNaseH-like_dom"/>
</dbReference>
<dbReference type="InterPro" id="IPR037027">
    <property type="entry name" value="YqgF/RNaseH-like_dom_sf"/>
</dbReference>
<dbReference type="NCBIfam" id="TIGR00250">
    <property type="entry name" value="RNAse_H_YqgF"/>
    <property type="match status" value="1"/>
</dbReference>
<dbReference type="PANTHER" id="PTHR33317">
    <property type="entry name" value="POLYNUCLEOTIDYL TRANSFERASE, RIBONUCLEASE H-LIKE SUPERFAMILY PROTEIN"/>
    <property type="match status" value="1"/>
</dbReference>
<dbReference type="PANTHER" id="PTHR33317:SF4">
    <property type="entry name" value="POLYNUCLEOTIDYL TRANSFERASE, RIBONUCLEASE H-LIKE SUPERFAMILY PROTEIN"/>
    <property type="match status" value="1"/>
</dbReference>
<dbReference type="Pfam" id="PF03652">
    <property type="entry name" value="RuvX"/>
    <property type="match status" value="1"/>
</dbReference>
<dbReference type="SMART" id="SM00732">
    <property type="entry name" value="YqgFc"/>
    <property type="match status" value="1"/>
</dbReference>
<dbReference type="SUPFAM" id="SSF53098">
    <property type="entry name" value="Ribonuclease H-like"/>
    <property type="match status" value="1"/>
</dbReference>
<name>YQGF_UREPA</name>
<reference key="1">
    <citation type="journal article" date="2000" name="Nature">
        <title>The complete sequence of the mucosal pathogen Ureaplasma urealyticum.</title>
        <authorList>
            <person name="Glass J.I."/>
            <person name="Lefkowitz E.J."/>
            <person name="Glass J.S."/>
            <person name="Heiner C.R."/>
            <person name="Chen E.Y."/>
            <person name="Cassell G.H."/>
        </authorList>
    </citation>
    <scope>NUCLEOTIDE SEQUENCE [LARGE SCALE GENOMIC DNA]</scope>
    <source>
        <strain>ATCC 700970</strain>
    </source>
</reference>
<comment type="function">
    <text evidence="1">Could be a nuclease involved in processing of the 5'-end of pre-16S rRNA.</text>
</comment>
<comment type="subcellular location">
    <subcellularLocation>
        <location evidence="1">Cytoplasm</location>
    </subcellularLocation>
</comment>
<comment type="similarity">
    <text evidence="1">Belongs to the YqgF nuclease family.</text>
</comment>
<gene>
    <name type="ordered locus">UU370</name>
</gene>
<sequence>MRKLALDLGTKSCGFAISDLLGIIASGLDNFIYEENDFTAVLAKIDEIMINYHHEIDTIVLGYPTNVYDGSKNERTYLIESFYALLKQHFLNHEKIKIVYEDERFSTKIATQRLKNSCVKAAKIKKVKDKMSAVVILESYLSKNHFN</sequence>
<keyword id="KW-0963">Cytoplasm</keyword>
<keyword id="KW-0378">Hydrolase</keyword>
<keyword id="KW-0540">Nuclease</keyword>
<keyword id="KW-1185">Reference proteome</keyword>
<keyword id="KW-0690">Ribosome biogenesis</keyword>
<feature type="chain" id="PRO_0000172168" description="Putative pre-16S rRNA nuclease">
    <location>
        <begin position="1"/>
        <end position="147"/>
    </location>
</feature>
<accession>Q9PQC1</accession>
<evidence type="ECO:0000255" key="1">
    <source>
        <dbReference type="HAMAP-Rule" id="MF_00651"/>
    </source>
</evidence>